<name>TACT_BOVIN</name>
<keyword id="KW-0130">Cell adhesion</keyword>
<keyword id="KW-1015">Disulfide bond</keyword>
<keyword id="KW-0325">Glycoprotein</keyword>
<keyword id="KW-0393">Immunoglobulin domain</keyword>
<keyword id="KW-0472">Membrane</keyword>
<keyword id="KW-1185">Reference proteome</keyword>
<keyword id="KW-0677">Repeat</keyword>
<keyword id="KW-0732">Signal</keyword>
<keyword id="KW-0812">Transmembrane</keyword>
<keyword id="KW-1133">Transmembrane helix</keyword>
<dbReference type="EMBL" id="BC105154">
    <property type="protein sequence ID" value="AAI05155.1"/>
    <property type="molecule type" value="mRNA"/>
</dbReference>
<dbReference type="RefSeq" id="NP_001030244.1">
    <property type="nucleotide sequence ID" value="NM_001035072.2"/>
</dbReference>
<dbReference type="SMR" id="Q3MHP9"/>
<dbReference type="FunCoup" id="Q3MHP9">
    <property type="interactions" value="225"/>
</dbReference>
<dbReference type="STRING" id="9913.ENSBTAP00000019209"/>
<dbReference type="GlyCosmos" id="Q3MHP9">
    <property type="glycosylation" value="13 sites, No reported glycans"/>
</dbReference>
<dbReference type="GlyGen" id="Q3MHP9">
    <property type="glycosylation" value="13 sites"/>
</dbReference>
<dbReference type="PaxDb" id="9913-ENSBTAP00000019209"/>
<dbReference type="GeneID" id="509578"/>
<dbReference type="KEGG" id="bta:509578"/>
<dbReference type="CTD" id="10225"/>
<dbReference type="eggNOG" id="ENOG502QWNP">
    <property type="taxonomic scope" value="Eukaryota"/>
</dbReference>
<dbReference type="InParanoid" id="Q3MHP9"/>
<dbReference type="OrthoDB" id="9904226at2759"/>
<dbReference type="Proteomes" id="UP000009136">
    <property type="component" value="Unplaced"/>
</dbReference>
<dbReference type="GO" id="GO:0016020">
    <property type="term" value="C:membrane"/>
    <property type="evidence" value="ECO:0007669"/>
    <property type="project" value="UniProtKB-SubCell"/>
</dbReference>
<dbReference type="GO" id="GO:0007160">
    <property type="term" value="P:cell-matrix adhesion"/>
    <property type="evidence" value="ECO:0000318"/>
    <property type="project" value="GO_Central"/>
</dbReference>
<dbReference type="GO" id="GO:0006954">
    <property type="term" value="P:inflammatory response"/>
    <property type="evidence" value="ECO:0000318"/>
    <property type="project" value="GO_Central"/>
</dbReference>
<dbReference type="Gene3D" id="2.60.40.10">
    <property type="entry name" value="Immunoglobulins"/>
    <property type="match status" value="3"/>
</dbReference>
<dbReference type="InterPro" id="IPR042381">
    <property type="entry name" value="CD96"/>
</dbReference>
<dbReference type="InterPro" id="IPR007110">
    <property type="entry name" value="Ig-like_dom"/>
</dbReference>
<dbReference type="InterPro" id="IPR036179">
    <property type="entry name" value="Ig-like_dom_sf"/>
</dbReference>
<dbReference type="InterPro" id="IPR013783">
    <property type="entry name" value="Ig-like_fold"/>
</dbReference>
<dbReference type="InterPro" id="IPR003599">
    <property type="entry name" value="Ig_sub"/>
</dbReference>
<dbReference type="PANTHER" id="PTHR15317">
    <property type="entry name" value="T-CELL SURFACE PROTEIN TACTILE"/>
    <property type="match status" value="1"/>
</dbReference>
<dbReference type="PANTHER" id="PTHR15317:SF1">
    <property type="entry name" value="T-CELL SURFACE PROTEIN TACTILE"/>
    <property type="match status" value="1"/>
</dbReference>
<dbReference type="SMART" id="SM00409">
    <property type="entry name" value="IG"/>
    <property type="match status" value="2"/>
</dbReference>
<dbReference type="SUPFAM" id="SSF48726">
    <property type="entry name" value="Immunoglobulin"/>
    <property type="match status" value="2"/>
</dbReference>
<dbReference type="PROSITE" id="PS50835">
    <property type="entry name" value="IG_LIKE"/>
    <property type="match status" value="1"/>
</dbReference>
<organism>
    <name type="scientific">Bos taurus</name>
    <name type="common">Bovine</name>
    <dbReference type="NCBI Taxonomy" id="9913"/>
    <lineage>
        <taxon>Eukaryota</taxon>
        <taxon>Metazoa</taxon>
        <taxon>Chordata</taxon>
        <taxon>Craniata</taxon>
        <taxon>Vertebrata</taxon>
        <taxon>Euteleostomi</taxon>
        <taxon>Mammalia</taxon>
        <taxon>Eutheria</taxon>
        <taxon>Laurasiatheria</taxon>
        <taxon>Artiodactyla</taxon>
        <taxon>Ruminantia</taxon>
        <taxon>Pecora</taxon>
        <taxon>Bovidae</taxon>
        <taxon>Bovinae</taxon>
        <taxon>Bos</taxon>
    </lineage>
</organism>
<proteinExistence type="evidence at transcript level"/>
<protein>
    <recommendedName>
        <fullName>T-cell surface protein tactile</fullName>
    </recommendedName>
    <alternativeName>
        <fullName>Cell surface antigen CD96</fullName>
    </alternativeName>
    <alternativeName>
        <fullName>T cell-activated increased late expression protein</fullName>
    </alternativeName>
    <cdAntigenName>CD96</cdAntigenName>
</protein>
<evidence type="ECO:0000250" key="1"/>
<evidence type="ECO:0000255" key="2"/>
<evidence type="ECO:0000255" key="3">
    <source>
        <dbReference type="PROSITE-ProRule" id="PRU00114"/>
    </source>
</evidence>
<evidence type="ECO:0000256" key="4">
    <source>
        <dbReference type="SAM" id="MobiDB-lite"/>
    </source>
</evidence>
<sequence length="570" mass="63395">MEKKWTYCAVYSIIQMHLVRGIVEETFGAEEHIYALPGSDVNLTCQTQKKGILVQMQWSKVTDKVDLLAVYHPQHGFYCDSKSACRSLVAFREPPGNVFEWTLYLRNVSSSTTGKYECSFTLYPEGIQTKIYSLKIQTNVAQEEWKNNHTIEIEINGTLEIPCFQNTSLEISSVLTFAWLVEDNGTQKTLTAGGHPISNSALFKDRVRIGTDYRLYLSPVQIHDDGWKFSCHVVVRPGRVLRSSTTVKVFAKPEIPMIVENNSMDVIGERIFTCSLRNVFPTANLTWFIQRSFPQGEREEMYTTSEKRKNKDGFWELKSVLTSAYDNKPAHSNNLTIWCMALSPAPGHKVWNSSSEKITFFLGSLNPPIDSPLNATESTLGTRPSLANSISPTGYRTPSSTAHVDVSTSTSNVILPSVQTSNSDVPTRGFNYSWTSSGKDAKHSAPWMPSETNSSPSSGAGSTLPGDIFTSTTRASSEVPTTANVSTKNNHITGTVISKPKDGMSWPVIVAALLLSCFVLFGLGVRKWCQYQKEIMQRPPPFKPPPPPIKYTCIQESIGSDLPCHELETL</sequence>
<reference key="1">
    <citation type="submission" date="2005-09" db="EMBL/GenBank/DDBJ databases">
        <authorList>
            <consortium name="NIH - Mammalian Gene Collection (MGC) project"/>
        </authorList>
    </citation>
    <scope>NUCLEOTIDE SEQUENCE [LARGE SCALE MRNA]</scope>
    <source>
        <strain>Crossbred X Angus</strain>
        <tissue>Ileum</tissue>
    </source>
</reference>
<feature type="signal peptide" evidence="2">
    <location>
        <begin position="1"/>
        <end position="21"/>
    </location>
</feature>
<feature type="chain" id="PRO_0000313890" description="T-cell surface protein tactile">
    <location>
        <begin position="22"/>
        <end position="570"/>
    </location>
</feature>
<feature type="topological domain" description="Extracellular" evidence="2">
    <location>
        <begin position="22"/>
        <end position="504"/>
    </location>
</feature>
<feature type="transmembrane region" description="Helical" evidence="2">
    <location>
        <begin position="505"/>
        <end position="525"/>
    </location>
</feature>
<feature type="topological domain" description="Cytoplasmic" evidence="2">
    <location>
        <begin position="526"/>
        <end position="570"/>
    </location>
</feature>
<feature type="domain" description="Ig-like V-type 1">
    <location>
        <begin position="38"/>
        <end position="125"/>
    </location>
</feature>
<feature type="domain" description="Ig-like V-type 2">
    <location>
        <begin position="156"/>
        <end position="222"/>
    </location>
</feature>
<feature type="domain" description="Ig-like C2-type">
    <location>
        <begin position="253"/>
        <end position="359"/>
    </location>
</feature>
<feature type="region of interest" description="Disordered" evidence="4">
    <location>
        <begin position="373"/>
        <end position="403"/>
    </location>
</feature>
<feature type="region of interest" description="Disordered" evidence="4">
    <location>
        <begin position="441"/>
        <end position="486"/>
    </location>
</feature>
<feature type="compositionally biased region" description="Polar residues" evidence="4">
    <location>
        <begin position="450"/>
        <end position="461"/>
    </location>
</feature>
<feature type="compositionally biased region" description="Polar residues" evidence="4">
    <location>
        <begin position="469"/>
        <end position="486"/>
    </location>
</feature>
<feature type="glycosylation site" description="N-linked (GlcNAc...) asparagine" evidence="2">
    <location>
        <position position="42"/>
    </location>
</feature>
<feature type="glycosylation site" description="N-linked (GlcNAc...) asparagine" evidence="2">
    <location>
        <position position="107"/>
    </location>
</feature>
<feature type="glycosylation site" description="N-linked (GlcNAc...) asparagine" evidence="2">
    <location>
        <position position="148"/>
    </location>
</feature>
<feature type="glycosylation site" description="N-linked (GlcNAc...) asparagine" evidence="2">
    <location>
        <position position="156"/>
    </location>
</feature>
<feature type="glycosylation site" description="N-linked (GlcNAc...) asparagine" evidence="2">
    <location>
        <position position="166"/>
    </location>
</feature>
<feature type="glycosylation site" description="N-linked (GlcNAc...) asparagine" evidence="2">
    <location>
        <position position="184"/>
    </location>
</feature>
<feature type="glycosylation site" description="N-linked (GlcNAc...) asparagine" evidence="2">
    <location>
        <position position="261"/>
    </location>
</feature>
<feature type="glycosylation site" description="N-linked (GlcNAc...) asparagine" evidence="2">
    <location>
        <position position="284"/>
    </location>
</feature>
<feature type="glycosylation site" description="N-linked (GlcNAc...) asparagine" evidence="2">
    <location>
        <position position="334"/>
    </location>
</feature>
<feature type="glycosylation site" description="N-linked (GlcNAc...) asparagine" evidence="2">
    <location>
        <position position="352"/>
    </location>
</feature>
<feature type="glycosylation site" description="N-linked (GlcNAc...) asparagine" evidence="2">
    <location>
        <position position="374"/>
    </location>
</feature>
<feature type="glycosylation site" description="N-linked (GlcNAc...) asparagine" evidence="2">
    <location>
        <position position="431"/>
    </location>
</feature>
<feature type="glycosylation site" description="N-linked (GlcNAc...) asparagine" evidence="2">
    <location>
        <position position="484"/>
    </location>
</feature>
<feature type="disulfide bond" evidence="3">
    <location>
        <begin position="45"/>
        <end position="118"/>
    </location>
</feature>
<feature type="disulfide bond" evidence="3">
    <location>
        <begin position="163"/>
        <end position="231"/>
    </location>
</feature>
<feature type="disulfide bond" evidence="3">
    <location>
        <begin position="274"/>
        <end position="339"/>
    </location>
</feature>
<comment type="function">
    <text evidence="1">May be involved in adhesive interactions of activated T and NK cells during the late phase of the immune response. Promotes NK cell-target adhesion by interacting with PVR present on target cells. May function at a time after T and NK cells have penetrated the endothelium using integrins and selectins, when they are actively engaging diseased cells and moving within areas of inflammation (By similarity).</text>
</comment>
<comment type="subunit">
    <text evidence="1">Homodimer; disulfide-linked. Interacts with PVR (By similarity).</text>
</comment>
<comment type="subcellular location">
    <subcellularLocation>
        <location evidence="1">Membrane</location>
        <topology evidence="1">Single-pass type I membrane protein</topology>
    </subcellularLocation>
</comment>
<gene>
    <name type="primary">CD96</name>
</gene>
<accession>Q3MHP9</accession>